<evidence type="ECO:0000255" key="1">
    <source>
        <dbReference type="HAMAP-Rule" id="MF_01234"/>
    </source>
</evidence>
<proteinExistence type="inferred from homology"/>
<reference key="1">
    <citation type="journal article" date="2009" name="PLoS Genet.">
        <title>Organised genome dynamics in the Escherichia coli species results in highly diverse adaptive paths.</title>
        <authorList>
            <person name="Touchon M."/>
            <person name="Hoede C."/>
            <person name="Tenaillon O."/>
            <person name="Barbe V."/>
            <person name="Baeriswyl S."/>
            <person name="Bidet P."/>
            <person name="Bingen E."/>
            <person name="Bonacorsi S."/>
            <person name="Bouchier C."/>
            <person name="Bouvet O."/>
            <person name="Calteau A."/>
            <person name="Chiapello H."/>
            <person name="Clermont O."/>
            <person name="Cruveiller S."/>
            <person name="Danchin A."/>
            <person name="Diard M."/>
            <person name="Dossat C."/>
            <person name="Karoui M.E."/>
            <person name="Frapy E."/>
            <person name="Garry L."/>
            <person name="Ghigo J.M."/>
            <person name="Gilles A.M."/>
            <person name="Johnson J."/>
            <person name="Le Bouguenec C."/>
            <person name="Lescat M."/>
            <person name="Mangenot S."/>
            <person name="Martinez-Jehanne V."/>
            <person name="Matic I."/>
            <person name="Nassif X."/>
            <person name="Oztas S."/>
            <person name="Petit M.A."/>
            <person name="Pichon C."/>
            <person name="Rouy Z."/>
            <person name="Ruf C.S."/>
            <person name="Schneider D."/>
            <person name="Tourret J."/>
            <person name="Vacherie B."/>
            <person name="Vallenet D."/>
            <person name="Medigue C."/>
            <person name="Rocha E.P.C."/>
            <person name="Denamur E."/>
        </authorList>
    </citation>
    <scope>NUCLEOTIDE SEQUENCE [LARGE SCALE GENOMIC DNA]</scope>
    <source>
        <strain>S88 / ExPEC</strain>
    </source>
</reference>
<protein>
    <recommendedName>
        <fullName evidence="1">N-acetylmannosamine kinase</fullName>
        <ecNumber evidence="1">2.7.1.60</ecNumber>
    </recommendedName>
    <alternativeName>
        <fullName evidence="1">ManNAc kinase</fullName>
    </alternativeName>
    <alternativeName>
        <fullName evidence="1">N-acetyl-D-mannosamine kinase</fullName>
    </alternativeName>
</protein>
<name>NANK_ECO45</name>
<comment type="function">
    <text evidence="1">Catalyzes the phosphorylation of N-acetylmannosamine (ManNAc) to ManNAc-6-P.</text>
</comment>
<comment type="catalytic activity">
    <reaction evidence="1">
        <text>an N-acyl-D-mannosamine + ATP = an N-acyl-D-mannosamine 6-phosphate + ADP + H(+)</text>
        <dbReference type="Rhea" id="RHEA:23832"/>
        <dbReference type="ChEBI" id="CHEBI:15378"/>
        <dbReference type="ChEBI" id="CHEBI:16062"/>
        <dbReference type="ChEBI" id="CHEBI:30616"/>
        <dbReference type="ChEBI" id="CHEBI:57666"/>
        <dbReference type="ChEBI" id="CHEBI:456216"/>
        <dbReference type="EC" id="2.7.1.60"/>
    </reaction>
</comment>
<comment type="pathway">
    <text evidence="1">Amino-sugar metabolism; N-acetylneuraminate degradation; D-fructose 6-phosphate from N-acetylneuraminate: step 2/5.</text>
</comment>
<comment type="subunit">
    <text evidence="1">Homodimer.</text>
</comment>
<comment type="similarity">
    <text evidence="1">Belongs to the ROK (NagC/XylR) family. NanK subfamily.</text>
</comment>
<organism>
    <name type="scientific">Escherichia coli O45:K1 (strain S88 / ExPEC)</name>
    <dbReference type="NCBI Taxonomy" id="585035"/>
    <lineage>
        <taxon>Bacteria</taxon>
        <taxon>Pseudomonadati</taxon>
        <taxon>Pseudomonadota</taxon>
        <taxon>Gammaproteobacteria</taxon>
        <taxon>Enterobacterales</taxon>
        <taxon>Enterobacteriaceae</taxon>
        <taxon>Escherichia</taxon>
    </lineage>
</organism>
<sequence length="291" mass="29642">MTTLAIDIGGTKLAAALIGADGQIRDRRELPTPASQTPQALRDALSALVSPLQAHAQRVAIASTGIIRDGSLLALNPHNLGGLLHFPLVKTLEQLTNLPTIAINDAQAAAWAEYQALDGDITDMVFITVSTGVGGGVVSGGKLRTGPGGLAGHIGHTLADPHGPACGCGRTGCVEAIASGRGIATAAQGELAGANAKTIFTRAGQGDEQAQQLIHRSARTLARLIADIKATTDCQCVVVGGSVGLAEGYLALVETYLAQEPAAFHVDLLAAHYRHDAGLLGAALLAQGEIL</sequence>
<accession>B7MBY4</accession>
<keyword id="KW-0067">ATP-binding</keyword>
<keyword id="KW-0119">Carbohydrate metabolism</keyword>
<keyword id="KW-0418">Kinase</keyword>
<keyword id="KW-0479">Metal-binding</keyword>
<keyword id="KW-0547">Nucleotide-binding</keyword>
<keyword id="KW-1185">Reference proteome</keyword>
<keyword id="KW-0808">Transferase</keyword>
<keyword id="KW-0862">Zinc</keyword>
<gene>
    <name evidence="1" type="primary">nanK</name>
    <name type="ordered locus">ECS88_3599</name>
</gene>
<feature type="chain" id="PRO_1000139681" description="N-acetylmannosamine kinase">
    <location>
        <begin position="1"/>
        <end position="291"/>
    </location>
</feature>
<feature type="binding site" evidence="1">
    <location>
        <begin position="5"/>
        <end position="12"/>
    </location>
    <ligand>
        <name>ATP</name>
        <dbReference type="ChEBI" id="CHEBI:30616"/>
    </ligand>
</feature>
<feature type="binding site" evidence="1">
    <location>
        <begin position="132"/>
        <end position="139"/>
    </location>
    <ligand>
        <name>ATP</name>
        <dbReference type="ChEBI" id="CHEBI:30616"/>
    </ligand>
</feature>
<feature type="binding site" evidence="1">
    <location>
        <position position="156"/>
    </location>
    <ligand>
        <name>Zn(2+)</name>
        <dbReference type="ChEBI" id="CHEBI:29105"/>
    </ligand>
</feature>
<feature type="binding site" evidence="1">
    <location>
        <position position="166"/>
    </location>
    <ligand>
        <name>Zn(2+)</name>
        <dbReference type="ChEBI" id="CHEBI:29105"/>
    </ligand>
</feature>
<feature type="binding site" evidence="1">
    <location>
        <position position="168"/>
    </location>
    <ligand>
        <name>Zn(2+)</name>
        <dbReference type="ChEBI" id="CHEBI:29105"/>
    </ligand>
</feature>
<feature type="binding site" evidence="1">
    <location>
        <position position="173"/>
    </location>
    <ligand>
        <name>Zn(2+)</name>
        <dbReference type="ChEBI" id="CHEBI:29105"/>
    </ligand>
</feature>
<dbReference type="EC" id="2.7.1.60" evidence="1"/>
<dbReference type="EMBL" id="CU928161">
    <property type="protein sequence ID" value="CAR04825.1"/>
    <property type="molecule type" value="Genomic_DNA"/>
</dbReference>
<dbReference type="RefSeq" id="WP_000209056.1">
    <property type="nucleotide sequence ID" value="NC_011742.1"/>
</dbReference>
<dbReference type="SMR" id="B7MBY4"/>
<dbReference type="KEGG" id="ecz:ECS88_3599"/>
<dbReference type="HOGENOM" id="CLU_036604_0_4_6"/>
<dbReference type="UniPathway" id="UPA00629">
    <property type="reaction ID" value="UER00681"/>
</dbReference>
<dbReference type="Proteomes" id="UP000000747">
    <property type="component" value="Chromosome"/>
</dbReference>
<dbReference type="GO" id="GO:0005524">
    <property type="term" value="F:ATP binding"/>
    <property type="evidence" value="ECO:0007669"/>
    <property type="project" value="UniProtKB-UniRule"/>
</dbReference>
<dbReference type="GO" id="GO:0009384">
    <property type="term" value="F:N-acylmannosamine kinase activity"/>
    <property type="evidence" value="ECO:0007669"/>
    <property type="project" value="UniProtKB-UniRule"/>
</dbReference>
<dbReference type="GO" id="GO:0008270">
    <property type="term" value="F:zinc ion binding"/>
    <property type="evidence" value="ECO:0007669"/>
    <property type="project" value="UniProtKB-UniRule"/>
</dbReference>
<dbReference type="GO" id="GO:0019262">
    <property type="term" value="P:N-acetylneuraminate catabolic process"/>
    <property type="evidence" value="ECO:0007669"/>
    <property type="project" value="UniProtKB-UniRule"/>
</dbReference>
<dbReference type="CDD" id="cd24069">
    <property type="entry name" value="ASKHA_NBD_ROK_EcNanK-like"/>
    <property type="match status" value="1"/>
</dbReference>
<dbReference type="FunFam" id="3.30.420.40:FF:000062">
    <property type="entry name" value="N-acetylmannosamine kinase"/>
    <property type="match status" value="1"/>
</dbReference>
<dbReference type="FunFam" id="3.30.420.40:FF:000063">
    <property type="entry name" value="N-acetylmannosamine kinase"/>
    <property type="match status" value="1"/>
</dbReference>
<dbReference type="Gene3D" id="3.30.420.40">
    <property type="match status" value="2"/>
</dbReference>
<dbReference type="HAMAP" id="MF_01234">
    <property type="entry name" value="ManNAc_kinase"/>
    <property type="match status" value="1"/>
</dbReference>
<dbReference type="InterPro" id="IPR043129">
    <property type="entry name" value="ATPase_NBD"/>
</dbReference>
<dbReference type="InterPro" id="IPR023945">
    <property type="entry name" value="ManNAc_kinase_bac"/>
</dbReference>
<dbReference type="InterPro" id="IPR000600">
    <property type="entry name" value="ROK"/>
</dbReference>
<dbReference type="InterPro" id="IPR049874">
    <property type="entry name" value="ROK_cs"/>
</dbReference>
<dbReference type="NCBIfam" id="NF047821">
    <property type="entry name" value="NactlManKinNanK"/>
    <property type="match status" value="1"/>
</dbReference>
<dbReference type="NCBIfam" id="NF003461">
    <property type="entry name" value="PRK05082.1"/>
    <property type="match status" value="1"/>
</dbReference>
<dbReference type="PANTHER" id="PTHR18964:SF169">
    <property type="entry name" value="N-ACETYLMANNOSAMINE KINASE"/>
    <property type="match status" value="1"/>
</dbReference>
<dbReference type="PANTHER" id="PTHR18964">
    <property type="entry name" value="ROK (REPRESSOR, ORF, KINASE) FAMILY"/>
    <property type="match status" value="1"/>
</dbReference>
<dbReference type="Pfam" id="PF00480">
    <property type="entry name" value="ROK"/>
    <property type="match status" value="1"/>
</dbReference>
<dbReference type="SUPFAM" id="SSF53067">
    <property type="entry name" value="Actin-like ATPase domain"/>
    <property type="match status" value="1"/>
</dbReference>
<dbReference type="PROSITE" id="PS01125">
    <property type="entry name" value="ROK"/>
    <property type="match status" value="1"/>
</dbReference>